<reference key="1">
    <citation type="journal article" date="1989" name="Mol. Microbiol.">
        <title>Identification, molecular cloning and sequence analysis of a gene cluster encoding the class II fructose 1,6-bisphosphate aldolase, 3-phosphoglycerate kinase and a putative second glyceraldehyde 3-phosphate dehydrogenase of Escherichia coli.</title>
        <authorList>
            <person name="Alefounder P.R."/>
            <person name="Perham R.N."/>
        </authorList>
    </citation>
    <scope>NUCLEOTIDE SEQUENCE [GENOMIC DNA]</scope>
    <source>
        <strain>K12 / CS520</strain>
    </source>
</reference>
<reference key="2">
    <citation type="journal article" date="1997" name="Science">
        <title>The complete genome sequence of Escherichia coli K-12.</title>
        <authorList>
            <person name="Blattner F.R."/>
            <person name="Plunkett G. III"/>
            <person name="Bloch C.A."/>
            <person name="Perna N.T."/>
            <person name="Burland V."/>
            <person name="Riley M."/>
            <person name="Collado-Vides J."/>
            <person name="Glasner J.D."/>
            <person name="Rode C.K."/>
            <person name="Mayhew G.F."/>
            <person name="Gregor J."/>
            <person name="Davis N.W."/>
            <person name="Kirkpatrick H.A."/>
            <person name="Goeden M.A."/>
            <person name="Rose D.J."/>
            <person name="Mau B."/>
            <person name="Shao Y."/>
        </authorList>
    </citation>
    <scope>NUCLEOTIDE SEQUENCE [LARGE SCALE GENOMIC DNA]</scope>
    <source>
        <strain>K12 / MG1655 / ATCC 47076</strain>
    </source>
</reference>
<reference key="3">
    <citation type="journal article" date="2006" name="Mol. Syst. Biol.">
        <title>Highly accurate genome sequences of Escherichia coli K-12 strains MG1655 and W3110.</title>
        <authorList>
            <person name="Hayashi K."/>
            <person name="Morooka N."/>
            <person name="Yamamoto Y."/>
            <person name="Fujita K."/>
            <person name="Isono K."/>
            <person name="Choi S."/>
            <person name="Ohtsubo E."/>
            <person name="Baba T."/>
            <person name="Wanner B.L."/>
            <person name="Mori H."/>
            <person name="Horiuchi T."/>
        </authorList>
    </citation>
    <scope>NUCLEOTIDE SEQUENCE [LARGE SCALE GENOMIC DNA]</scope>
    <source>
        <strain>K12 / W3110 / ATCC 27325 / DSM 5911</strain>
    </source>
</reference>
<reference key="4">
    <citation type="journal article" date="1987" name="Proc. Natl. Acad. Sci. U.S.A.">
        <title>Pressure-sensitive ion channel in Escherichia coli.</title>
        <authorList>
            <person name="Martinac B."/>
            <person name="Buechner M."/>
            <person name="Delcour A.H."/>
            <person name="Adler J."/>
            <person name="Kung C."/>
        </authorList>
    </citation>
    <scope>FUNCTION</scope>
    <scope>SUBCELLULAR LOCATION</scope>
    <source>
        <strain>K12 / AW405</strain>
    </source>
</reference>
<reference key="5">
    <citation type="journal article" date="1995" name="J. Membr. Biol.">
        <title>Characterization of mechanosensitive channels in Escherichia coli cytoplasmic membrane by whole-cell patch clamp recording.</title>
        <authorList>
            <person name="Cui C."/>
            <person name="Smith D.O."/>
            <person name="Adler J."/>
        </authorList>
    </citation>
    <scope>FUNCTION</scope>
    <scope>SUBCELLULAR LOCATION</scope>
    <scope>SENSITIVITY TO OSMOTIC AND VOLTAGE DIFFERENCES ACROSS THE CYTOPLASMIC MEMBRANE</scope>
    <source>
        <strain>K12</strain>
    </source>
</reference>
<reference key="6">
    <citation type="journal article" date="1999" name="EMBO J.">
        <title>Protection of Escherichia coli cells against extreme turgor by activation of MscS and MscL mechanosensitive channels: identification of genes required for MscS activity.</title>
        <authorList>
            <person name="Levina N."/>
            <person name="Toetemeyer S."/>
            <person name="Stokes N.R."/>
            <person name="Louis P."/>
            <person name="Jones M.A."/>
            <person name="Booth I.R."/>
        </authorList>
    </citation>
    <scope>FUNCTION</scope>
    <scope>SUBCELLULAR LOCATION</scope>
    <scope>PHYSIOLOGICAL ROLE</scope>
    <source>
        <strain>K12 / MJF379</strain>
    </source>
</reference>
<reference key="7">
    <citation type="journal article" date="2002" name="Biophys. J.">
        <title>Purification of the small mechanosensitive channel of Escherichia coli (MscS): the subunit structure, conduction, and gating characteristics in liposomes.</title>
        <authorList>
            <person name="Sukharev S."/>
        </authorList>
    </citation>
    <scope>LIPOSOME RECONSTITUTION</scope>
    <scope>FUNCTION</scope>
    <source>
        <strain>K12 / AW405</strain>
    </source>
</reference>
<reference key="8">
    <citation type="journal article" date="2002" name="J. Biol. Chem.">
        <title>Functional design of bacterial mechanosensitive channels. Comparisons and contrasts illuminated by random mutagenesis.</title>
        <authorList>
            <person name="Okada K."/>
            <person name="Moe P.C."/>
            <person name="Blount P."/>
        </authorList>
    </citation>
    <scope>LIPOSOME RECONSTITUTION</scope>
    <scope>FUNCTION</scope>
    <scope>MUTAGENESIS OF VAL-40</scope>
    <source>
        <strain>K12 / MJF379</strain>
    </source>
</reference>
<reference key="9">
    <citation type="journal article" date="2003" name="J. Biol. Chem.">
        <title>C termini of the Escherichia coli mechanosensitive ion channel (MscS) move apart upon the channel opening.</title>
        <authorList>
            <person name="Koprowski P."/>
            <person name="Kubalski A."/>
        </authorList>
    </citation>
    <scope>CROSS-LINKING OF THE C-TERMINI INHIBITS CHANNEL OPENING</scope>
    <scope>DOMAIN</scope>
    <scope>FUNCTION</scope>
    <scope>SUBCELLULAR LOCATION</scope>
    <source>
        <strain>K12 / MJF379</strain>
    </source>
</reference>
<reference key="10">
    <citation type="journal article" date="2003" name="J. Biol. Chem.">
        <title>The closed structure of the MscS mechanosensitive channel. Cross-linking of single cysteine mutants.</title>
        <authorList>
            <person name="Miller S."/>
            <person name="Edwards M.D."/>
            <person name="Ozdemir C."/>
            <person name="Booth I.R."/>
        </authorList>
    </citation>
    <scope>SUBUNIT IN THE CLOSED STATE</scope>
    <scope>MUTAGENESIS OF SER-58 AND SER-267</scope>
    <scope>DOMAIN</scope>
</reference>
<reference key="11">
    <citation type="journal article" date="2004" name="FEBS Lett.">
        <title>The conserved carboxy-terminus of the MscS mechanosensitive channel is not essential but increases stability and activity.</title>
        <authorList>
            <person name="Schumann U."/>
            <person name="Edwards M.D."/>
            <person name="Li C."/>
            <person name="Booth I.R."/>
        </authorList>
    </citation>
    <scope>C-TERMINAL DELETIONS</scope>
</reference>
<reference key="12">
    <citation type="journal article" date="2005" name="J. Biol. Chem.">
        <title>Protein complexes of the Escherichia coli cell envelope.</title>
        <authorList>
            <person name="Stenberg F."/>
            <person name="Chovanec P."/>
            <person name="Maslen S.L."/>
            <person name="Robinson C.V."/>
            <person name="Ilag L."/>
            <person name="von Heijne G."/>
            <person name="Daley D.O."/>
        </authorList>
    </citation>
    <scope>SUBUNIT</scope>
    <scope>SUBCELLULAR LOCATION</scope>
    <source>
        <strain>BL21-DE3</strain>
    </source>
</reference>
<reference key="13">
    <citation type="journal article" date="2005" name="Science">
        <title>Global topology analysis of the Escherichia coli inner membrane proteome.</title>
        <authorList>
            <person name="Daley D.O."/>
            <person name="Rapp M."/>
            <person name="Granseth E."/>
            <person name="Melen K."/>
            <person name="Drew D."/>
            <person name="von Heijne G."/>
        </authorList>
    </citation>
    <scope>TOPOLOGY [LARGE SCALE ANALYSIS]</scope>
    <source>
        <strain>K12 / MG1655 / ATCC 47076</strain>
    </source>
</reference>
<reference key="14">
    <citation type="journal article" date="2005" name="Nat. Struct. Mol. Biol.">
        <title>Pivotal role of the glycine-rich TM3 helix in gating the MscS mechanosensitive channel.</title>
        <authorList>
            <person name="Edwards M.D."/>
            <person name="Li Y."/>
            <person name="Kim S."/>
            <person name="Miller S."/>
            <person name="Bartlett W."/>
            <person name="Black S."/>
            <person name="Dennison S."/>
            <person name="Iscla I."/>
            <person name="Blount P."/>
            <person name="Bowie J.U."/>
            <person name="Booth I.R."/>
        </authorList>
    </citation>
    <scope>3D-STRUCTURE MODELING</scope>
    <scope>MUTAGENESIS OF CONSERVED GLY AND ALA RESIDUES IN TM3</scope>
    <scope>PRESENTATION OF MODELS OF THE CLOSED STATE CHANNEL AND CLOSED TO OPEN STATE TRANSITIONS</scope>
    <source>
        <strain>K12 / MJF431</strain>
    </source>
</reference>
<reference key="15">
    <citation type="journal article" date="2002" name="Science">
        <title>Crystal structure of Escherichia coli MscS, a voltage-modulated and mechanosensitive channel.</title>
        <authorList>
            <person name="Bass R.B."/>
            <person name="Strop P."/>
            <person name="Barclay M."/>
            <person name="Rees D.C."/>
        </authorList>
    </citation>
    <scope>X-RAY CRYSTALLOGRAPHY (3.9 ANGSTROMS) OF 27-280 PROBABLY IN THE OPEN STATE</scope>
    <scope>SUBUNIT</scope>
    <scope>FUNCTION</scope>
    <scope>TOPOLOGY</scope>
    <scope>DOMAIN</scope>
    <source>
        <strain>K12</strain>
    </source>
</reference>
<reference key="16">
    <citation type="journal article" date="2012" name="Proc. Natl. Acad. Sci. U.S.A.">
        <title>Conformational state of the MscS mechanosensitive channel in solution revealed by pulsed electron-electron double resonance (PELDOR) spectroscopy.</title>
        <authorList>
            <person name="Pliotas C."/>
            <person name="Ward R."/>
            <person name="Branigan E."/>
            <person name="Rasmussen A."/>
            <person name="Hagelueken G."/>
            <person name="Huang H."/>
            <person name="Black S.S."/>
            <person name="Booth I.R."/>
            <person name="Schiemann O."/>
            <person name="Naismith J.H."/>
        </authorList>
    </citation>
    <scope>X-RAY CRYSTALLOGRAPHY (4.70 ANGSTROMS)</scope>
    <scope>FUNCTION</scope>
    <scope>SUBUNIT</scope>
    <scope>SUBCELLULAR LOCATION</scope>
    <scope>TOPOLOGY</scope>
</reference>
<reference key="17">
    <citation type="journal article" date="2012" name="Proc. Natl. Acad. Sci. U.S.A.">
        <title>Structure and molecular mechanism of an anion-selective mechanosensitive channel of small conductance.</title>
        <authorList>
            <person name="Zhang X."/>
            <person name="Wang J."/>
            <person name="Feng Y."/>
            <person name="Ge J."/>
            <person name="Li W."/>
            <person name="Sun W."/>
            <person name="Iscla I."/>
            <person name="Yu J."/>
            <person name="Blount P."/>
            <person name="Li Y."/>
            <person name="Yang M."/>
        </authorList>
    </citation>
    <scope>X-RAY CRYSTALLOGRAPHY (3.35 ANGSTROMS) OF 272-286</scope>
    <scope>FUNCTION</scope>
    <scope>SUBUNIT</scope>
    <scope>SUBCELLULAR LOCATION</scope>
    <scope>DOMAIN</scope>
    <scope>MUTAGENESIS OF ALA-158</scope>
</reference>
<reference key="18">
    <citation type="journal article" date="2013" name="Protein Sci.">
        <title>Open and shut: crystal structures of the dodecylmaltoside solubilized mechanosensitive channel of small conductance from Escherichia coli and Helicobacter pylori at 4.4 A and 4.1 A resolutions.</title>
        <authorList>
            <person name="Lai J.Y."/>
            <person name="Poon Y.S."/>
            <person name="Kaiser J.T."/>
            <person name="Rees D.C."/>
        </authorList>
    </citation>
    <scope>X-RAY CRYSTALLOGRAPHY (4.37 ANGSTROMS)</scope>
    <scope>SUBUNIT</scope>
    <scope>TOPOLOGY</scope>
</reference>
<reference key="19">
    <citation type="journal article" date="2015" name="Nat. Struct. Mol. Biol.">
        <title>The role of lipids in mechanosensation.</title>
        <authorList>
            <person name="Pliotas C."/>
            <person name="Dahl A.C."/>
            <person name="Rasmussen T."/>
            <person name="Mahendran K.R."/>
            <person name="Smith T.K."/>
            <person name="Marius P."/>
            <person name="Gault J."/>
            <person name="Banda T."/>
            <person name="Rasmussen A."/>
            <person name="Miller S."/>
            <person name="Robinson C.V."/>
            <person name="Bayley H."/>
            <person name="Sansom M.S."/>
            <person name="Booth I.R."/>
            <person name="Naismith J.H."/>
        </authorList>
    </citation>
    <scope>X-RAY CRYSTALLOGRAPHY (2.99 ANGSTROMS)</scope>
    <scope>FUNCTION</scope>
    <scope>SUBUNIT</scope>
    <scope>TOPOLOGY</scope>
    <scope>DOMAIN</scope>
</reference>
<gene>
    <name type="primary">mscS</name>
    <name type="synonym">yggB</name>
    <name type="ordered locus">b2924</name>
    <name type="ordered locus">JW2891</name>
</gene>
<proteinExistence type="evidence at protein level"/>
<organism>
    <name type="scientific">Escherichia coli (strain K12)</name>
    <dbReference type="NCBI Taxonomy" id="83333"/>
    <lineage>
        <taxon>Bacteria</taxon>
        <taxon>Pseudomonadati</taxon>
        <taxon>Pseudomonadota</taxon>
        <taxon>Gammaproteobacteria</taxon>
        <taxon>Enterobacterales</taxon>
        <taxon>Enterobacteriaceae</taxon>
        <taxon>Escherichia</taxon>
    </lineage>
</organism>
<evidence type="ECO:0000269" key="1">
    <source>
    </source>
</evidence>
<evidence type="ECO:0000269" key="2">
    <source>
    </source>
</evidence>
<evidence type="ECO:0000269" key="3">
    <source>
    </source>
</evidence>
<evidence type="ECO:0000269" key="4">
    <source>
    </source>
</evidence>
<evidence type="ECO:0000269" key="5">
    <source>
    </source>
</evidence>
<evidence type="ECO:0000269" key="6">
    <source>
    </source>
</evidence>
<evidence type="ECO:0000269" key="7">
    <source>
    </source>
</evidence>
<evidence type="ECO:0000269" key="8">
    <source>
    </source>
</evidence>
<evidence type="ECO:0000269" key="9">
    <source>
    </source>
</evidence>
<evidence type="ECO:0000269" key="10">
    <source>
    </source>
</evidence>
<evidence type="ECO:0000269" key="11">
    <source>
    </source>
</evidence>
<evidence type="ECO:0000269" key="12">
    <source>
    </source>
</evidence>
<evidence type="ECO:0000269" key="13">
    <source>
    </source>
</evidence>
<evidence type="ECO:0000269" key="14">
    <source>
    </source>
</evidence>
<evidence type="ECO:0000305" key="15"/>
<evidence type="ECO:0000305" key="16">
    <source>
    </source>
</evidence>
<evidence type="ECO:0007829" key="17">
    <source>
        <dbReference type="PDB" id="5AJI"/>
    </source>
</evidence>
<evidence type="ECO:0007829" key="18">
    <source>
        <dbReference type="PDB" id="6PWN"/>
    </source>
</evidence>
<evidence type="ECO:0007829" key="19">
    <source>
        <dbReference type="PDB" id="6PWO"/>
    </source>
</evidence>
<evidence type="ECO:0007829" key="20">
    <source>
        <dbReference type="PDB" id="6RLD"/>
    </source>
</evidence>
<evidence type="ECO:0007829" key="21">
    <source>
        <dbReference type="PDB" id="8DDJ"/>
    </source>
</evidence>
<keyword id="KW-0002">3D-structure</keyword>
<keyword id="KW-0997">Cell inner membrane</keyword>
<keyword id="KW-1003">Cell membrane</keyword>
<keyword id="KW-0407">Ion channel</keyword>
<keyword id="KW-0406">Ion transport</keyword>
<keyword id="KW-0472">Membrane</keyword>
<keyword id="KW-1185">Reference proteome</keyword>
<keyword id="KW-0812">Transmembrane</keyword>
<keyword id="KW-1133">Transmembrane helix</keyword>
<keyword id="KW-0813">Transport</keyword>
<comment type="function">
    <text evidence="1 2 3 4 5 6 9 10 12 13 14">Mechanosensitive channel that participates in the regulation of osmotic pressure changes within the cell, opening in response to stretch forces in the membrane lipid bilayer, without the need for other proteins. Contributes to normal resistance to hypoosmotic shock. Forms an ion channel of 1.0 nanosiemens conductance with a slight preference for anions. The channel is sensitive to voltage; as the membrane is depolarized, less tension is required to open the channel and vice versa. The channel is characterized by short bursts of activity that last for a few seconds.</text>
</comment>
<comment type="subunit">
    <text evidence="4 6 8 9 10 11 13">Homoheptamer.</text>
</comment>
<comment type="interaction">
    <interactant intactId="EBI-554616">
        <id>P0C0S1</id>
    </interactant>
    <interactant intactId="EBI-554616">
        <id>P0C0S1</id>
        <label>mscS</label>
    </interactant>
    <organismsDiffer>false</organismsDiffer>
    <experiments>7</experiments>
</comment>
<comment type="subcellular location">
    <subcellularLocation>
        <location evidence="1 5 8 9 10 12 14">Cell inner membrane</location>
        <topology evidence="4 8 9 11 13">Multi-pass membrane protein</topology>
    </subcellularLocation>
</comment>
<comment type="domain">
    <text evidence="4 5 6 10 13">The channel pore is formed by TM3 and the loop between TM2 and TM3. After a sharp turn at Gly-113, an alpha-helix (residues 114-127) is oriented nearly parallel to the plane of the putative lipid bilayer. On the intracellular side of the channel, the permeation pathway of MscS does not connect directly to the cytoplasm but instead opens to a large chamber that is connected to the cytoplasm. This chamber resembles a molecular filter that could serve to prescreen large molecules before they are allowed passage to the transmembrane pore. The TM1 and TM2 helices appear to be likely candidates for mediating the tension and voltage sensitivities of MscS. Gating requires large rearrangements of at least the C-terminus, and is probably influenced by freely exchangeable membrane lipids that bind in grooves and pockets between the transmembrane helices and enhance the stability of the closed channel conformation. In a hypoosmotic environment the membrane is stretched, and lipids may be pulled into the lipid bilayer and away from the protein, which is predicted to destabilize the closed conformation and promote channel gating.</text>
</comment>
<comment type="similarity">
    <text evidence="15">Belongs to the MscS (TC 1.A.23) family.</text>
</comment>
<name>MSCS_ECOLI</name>
<dbReference type="EMBL" id="X14436">
    <property type="protein sequence ID" value="CAA32606.1"/>
    <property type="molecule type" value="Genomic_DNA"/>
</dbReference>
<dbReference type="EMBL" id="U28377">
    <property type="protein sequence ID" value="AAA69091.1"/>
    <property type="molecule type" value="Genomic_DNA"/>
</dbReference>
<dbReference type="EMBL" id="U00096">
    <property type="protein sequence ID" value="AAC75961.1"/>
    <property type="molecule type" value="Genomic_DNA"/>
</dbReference>
<dbReference type="EMBL" id="AP009048">
    <property type="protein sequence ID" value="BAE76988.1"/>
    <property type="molecule type" value="Genomic_DNA"/>
</dbReference>
<dbReference type="PIR" id="S04735">
    <property type="entry name" value="QQEC4A"/>
</dbReference>
<dbReference type="RefSeq" id="NP_417399.1">
    <property type="nucleotide sequence ID" value="NC_000913.3"/>
</dbReference>
<dbReference type="RefSeq" id="WP_000389818.1">
    <property type="nucleotide sequence ID" value="NZ_STEB01000001.1"/>
</dbReference>
<dbReference type="PDB" id="2OAU">
    <property type="method" value="X-ray"/>
    <property type="resolution" value="3.70 A"/>
    <property type="chains" value="A/B/C/D/E/F/G=1-286"/>
</dbReference>
<dbReference type="PDB" id="2VV5">
    <property type="method" value="X-ray"/>
    <property type="resolution" value="3.45 A"/>
    <property type="chains" value="A/B/C/D/E/F/G=1-286"/>
</dbReference>
<dbReference type="PDB" id="3UDC">
    <property type="method" value="X-ray"/>
    <property type="resolution" value="3.36 A"/>
    <property type="chains" value="A/B/C/D/E/F/G=272-286"/>
</dbReference>
<dbReference type="PDB" id="4AGE">
    <property type="method" value="X-ray"/>
    <property type="resolution" value="4.84 A"/>
    <property type="chains" value="A/B/C/D/E/F/G=1-286"/>
</dbReference>
<dbReference type="PDB" id="4AGF">
    <property type="method" value="X-ray"/>
    <property type="resolution" value="4.70 A"/>
    <property type="chains" value="A/B/C/D/E/F/G=1-286"/>
</dbReference>
<dbReference type="PDB" id="4HWA">
    <property type="method" value="X-ray"/>
    <property type="resolution" value="4.37 A"/>
    <property type="chains" value="A/B/C/D/E/F/G=1-286"/>
</dbReference>
<dbReference type="PDB" id="5AJI">
    <property type="method" value="X-ray"/>
    <property type="resolution" value="2.99 A"/>
    <property type="chains" value="A/B/C/D/E/F/G=1-286"/>
</dbReference>
<dbReference type="PDB" id="6PWN">
    <property type="method" value="EM"/>
    <property type="resolution" value="3.10 A"/>
    <property type="chains" value="A/B/C/D/E/F/G=1-286"/>
</dbReference>
<dbReference type="PDB" id="6PWO">
    <property type="method" value="EM"/>
    <property type="resolution" value="3.40 A"/>
    <property type="chains" value="A/B/C/D/E/F/G=1-286"/>
</dbReference>
<dbReference type="PDB" id="6PWP">
    <property type="method" value="EM"/>
    <property type="resolution" value="4.10 A"/>
    <property type="chains" value="A/B/C/D/E/F/G=1-286"/>
</dbReference>
<dbReference type="PDB" id="6RLD">
    <property type="method" value="EM"/>
    <property type="resolution" value="2.93 A"/>
    <property type="chains" value="A/B/C/D/E/F/G=1-286"/>
</dbReference>
<dbReference type="PDB" id="6UZH">
    <property type="method" value="EM"/>
    <property type="resolution" value="3.30 A"/>
    <property type="chains" value="A/B/C/D/E/F/G=1-286"/>
</dbReference>
<dbReference type="PDB" id="6VYK">
    <property type="method" value="EM"/>
    <property type="resolution" value="3.20 A"/>
    <property type="chains" value="A/B/C/D/E/F/G=1-286"/>
</dbReference>
<dbReference type="PDB" id="6VYL">
    <property type="method" value="EM"/>
    <property type="resolution" value="3.40 A"/>
    <property type="chains" value="A/B/C/D/E/F/G=1-286"/>
</dbReference>
<dbReference type="PDB" id="6VYM">
    <property type="method" value="EM"/>
    <property type="resolution" value="3.70 A"/>
    <property type="chains" value="A/B/C/D/E/F/G=1-286"/>
</dbReference>
<dbReference type="PDB" id="7ONL">
    <property type="method" value="EM"/>
    <property type="resolution" value="3.90 A"/>
    <property type="chains" value="A/B/C/D/E/F/G=1-286"/>
</dbReference>
<dbReference type="PDB" id="7OO0">
    <property type="method" value="EM"/>
    <property type="resolution" value="3.10 A"/>
    <property type="chains" value="A/B/C/D/E/F/G=1-286"/>
</dbReference>
<dbReference type="PDB" id="7OO6">
    <property type="method" value="EM"/>
    <property type="resolution" value="3.10 A"/>
    <property type="chains" value="A/B/C/D/E/F/G=1-286"/>
</dbReference>
<dbReference type="PDB" id="7RAZ">
    <property type="method" value="EM"/>
    <property type="resolution" value="3.40 A"/>
    <property type="chains" value="A/B/C/D/E/F/G=1-286"/>
</dbReference>
<dbReference type="PDB" id="8DDJ">
    <property type="method" value="EM"/>
    <property type="resolution" value="3.10 A"/>
    <property type="chains" value="A/B/C/D/E/F/G=1-280"/>
</dbReference>
<dbReference type="PDBsum" id="2OAU"/>
<dbReference type="PDBsum" id="2VV5"/>
<dbReference type="PDBsum" id="3UDC"/>
<dbReference type="PDBsum" id="4AGE"/>
<dbReference type="PDBsum" id="4AGF"/>
<dbReference type="PDBsum" id="4HWA"/>
<dbReference type="PDBsum" id="5AJI"/>
<dbReference type="PDBsum" id="6PWN"/>
<dbReference type="PDBsum" id="6PWO"/>
<dbReference type="PDBsum" id="6PWP"/>
<dbReference type="PDBsum" id="6RLD"/>
<dbReference type="PDBsum" id="6UZH"/>
<dbReference type="PDBsum" id="6VYK"/>
<dbReference type="PDBsum" id="6VYL"/>
<dbReference type="PDBsum" id="6VYM"/>
<dbReference type="PDBsum" id="7ONL"/>
<dbReference type="PDBsum" id="7OO0"/>
<dbReference type="PDBsum" id="7OO6"/>
<dbReference type="PDBsum" id="7RAZ"/>
<dbReference type="PDBsum" id="8DDJ"/>
<dbReference type="EMDB" id="EMD-12997"/>
<dbReference type="EMDB" id="EMD-20508"/>
<dbReference type="EMDB" id="EMD-20509"/>
<dbReference type="EMDB" id="EMD-20510"/>
<dbReference type="EMDB" id="EMD-24390"/>
<dbReference type="EMDB" id="EMD-4919"/>
<dbReference type="SMR" id="P0C0S1"/>
<dbReference type="BioGRID" id="4259238">
    <property type="interactions" value="255"/>
</dbReference>
<dbReference type="DIP" id="DIP-36192N"/>
<dbReference type="FunCoup" id="P0C0S1">
    <property type="interactions" value="338"/>
</dbReference>
<dbReference type="IntAct" id="P0C0S1">
    <property type="interactions" value="2"/>
</dbReference>
<dbReference type="STRING" id="511145.b2924"/>
<dbReference type="TCDB" id="1.A.23.2.1">
    <property type="family name" value="the small conductance mechanosensitive ion channel (mscs) family"/>
</dbReference>
<dbReference type="jPOST" id="P0C0S1"/>
<dbReference type="PaxDb" id="511145-b2924"/>
<dbReference type="EnsemblBacteria" id="AAC75961">
    <property type="protein sequence ID" value="AAC75961"/>
    <property type="gene ID" value="b2924"/>
</dbReference>
<dbReference type="GeneID" id="93779074"/>
<dbReference type="GeneID" id="947416"/>
<dbReference type="KEGG" id="ecj:JW2891"/>
<dbReference type="KEGG" id="eco:b2924"/>
<dbReference type="KEGG" id="ecoc:C3026_16020"/>
<dbReference type="PATRIC" id="fig|1411691.4.peg.3808"/>
<dbReference type="EchoBASE" id="EB1149"/>
<dbReference type="eggNOG" id="COG0668">
    <property type="taxonomic scope" value="Bacteria"/>
</dbReference>
<dbReference type="HOGENOM" id="CLU_037945_1_1_6"/>
<dbReference type="InParanoid" id="P0C0S1"/>
<dbReference type="OMA" id="FTIRVWA"/>
<dbReference type="OrthoDB" id="9809206at2"/>
<dbReference type="PhylomeDB" id="P0C0S1"/>
<dbReference type="BioCyc" id="EcoCyc:EG11160-MONOMER"/>
<dbReference type="BioCyc" id="MetaCyc:EG11160-MONOMER"/>
<dbReference type="EvolutionaryTrace" id="P0C0S1"/>
<dbReference type="PRO" id="PR:P0C0S1"/>
<dbReference type="Proteomes" id="UP000000625">
    <property type="component" value="Chromosome"/>
</dbReference>
<dbReference type="GO" id="GO:0016020">
    <property type="term" value="C:membrane"/>
    <property type="evidence" value="ECO:0000314"/>
    <property type="project" value="EcoCyc"/>
</dbReference>
<dbReference type="GO" id="GO:0005886">
    <property type="term" value="C:plasma membrane"/>
    <property type="evidence" value="ECO:0000314"/>
    <property type="project" value="UniProtKB"/>
</dbReference>
<dbReference type="GO" id="GO:0042802">
    <property type="term" value="F:identical protein binding"/>
    <property type="evidence" value="ECO:0000353"/>
    <property type="project" value="IntAct"/>
</dbReference>
<dbReference type="GO" id="GO:0008381">
    <property type="term" value="F:mechanosensitive monoatomic ion channel activity"/>
    <property type="evidence" value="ECO:0000314"/>
    <property type="project" value="UniProtKB"/>
</dbReference>
<dbReference type="GO" id="GO:0009992">
    <property type="term" value="P:intracellular water homeostasis"/>
    <property type="evidence" value="ECO:0000315"/>
    <property type="project" value="EcoCyc"/>
</dbReference>
<dbReference type="GO" id="GO:0034220">
    <property type="term" value="P:monoatomic ion transmembrane transport"/>
    <property type="evidence" value="ECO:0000314"/>
    <property type="project" value="UniProtKB"/>
</dbReference>
<dbReference type="GO" id="GO:0051260">
    <property type="term" value="P:protein homooligomerization"/>
    <property type="evidence" value="ECO:0000314"/>
    <property type="project" value="UniProtKB"/>
</dbReference>
<dbReference type="FunFam" id="2.30.30.60:FF:000001">
    <property type="entry name" value="MscS Mechanosensitive ion channel"/>
    <property type="match status" value="1"/>
</dbReference>
<dbReference type="FunFam" id="1.10.287.1260:FF:000001">
    <property type="entry name" value="Small-conductance mechanosensitive channel MscS"/>
    <property type="match status" value="1"/>
</dbReference>
<dbReference type="FunFam" id="3.30.70.100:FF:000010">
    <property type="entry name" value="Small-conductance mechanosensitive channel MscS"/>
    <property type="match status" value="1"/>
</dbReference>
<dbReference type="Gene3D" id="1.10.287.1260">
    <property type="match status" value="1"/>
</dbReference>
<dbReference type="Gene3D" id="2.30.30.60">
    <property type="match status" value="1"/>
</dbReference>
<dbReference type="Gene3D" id="3.30.70.100">
    <property type="match status" value="1"/>
</dbReference>
<dbReference type="InterPro" id="IPR010920">
    <property type="entry name" value="LSM_dom_sf"/>
</dbReference>
<dbReference type="InterPro" id="IPR049142">
    <property type="entry name" value="MS_channel_1st"/>
</dbReference>
<dbReference type="InterPro" id="IPR049278">
    <property type="entry name" value="MS_channel_C"/>
</dbReference>
<dbReference type="InterPro" id="IPR008910">
    <property type="entry name" value="MSC_TM_helix"/>
</dbReference>
<dbReference type="InterPro" id="IPR045275">
    <property type="entry name" value="MscS_archaea/bacteria_type"/>
</dbReference>
<dbReference type="InterPro" id="IPR023408">
    <property type="entry name" value="MscS_beta-dom_sf"/>
</dbReference>
<dbReference type="InterPro" id="IPR006685">
    <property type="entry name" value="MscS_channel_2nd"/>
</dbReference>
<dbReference type="InterPro" id="IPR011066">
    <property type="entry name" value="MscS_channel_C_sf"/>
</dbReference>
<dbReference type="InterPro" id="IPR006686">
    <property type="entry name" value="MscS_channel_CS"/>
</dbReference>
<dbReference type="InterPro" id="IPR011014">
    <property type="entry name" value="MscS_channel_TM-2"/>
</dbReference>
<dbReference type="NCBIfam" id="NF007662">
    <property type="entry name" value="PRK10334.1"/>
    <property type="match status" value="1"/>
</dbReference>
<dbReference type="PANTHER" id="PTHR30221">
    <property type="entry name" value="SMALL-CONDUCTANCE MECHANOSENSITIVE CHANNEL"/>
    <property type="match status" value="1"/>
</dbReference>
<dbReference type="PANTHER" id="PTHR30221:SF1">
    <property type="entry name" value="SMALL-CONDUCTANCE MECHANOSENSITIVE CHANNEL"/>
    <property type="match status" value="1"/>
</dbReference>
<dbReference type="Pfam" id="PF21088">
    <property type="entry name" value="MS_channel_1st"/>
    <property type="match status" value="1"/>
</dbReference>
<dbReference type="Pfam" id="PF05552">
    <property type="entry name" value="MS_channel_1st_1"/>
    <property type="match status" value="1"/>
</dbReference>
<dbReference type="Pfam" id="PF00924">
    <property type="entry name" value="MS_channel_2nd"/>
    <property type="match status" value="1"/>
</dbReference>
<dbReference type="Pfam" id="PF21082">
    <property type="entry name" value="MS_channel_3rd"/>
    <property type="match status" value="1"/>
</dbReference>
<dbReference type="SUPFAM" id="SSF82689">
    <property type="entry name" value="Mechanosensitive channel protein MscS (YggB), C-terminal domain"/>
    <property type="match status" value="1"/>
</dbReference>
<dbReference type="SUPFAM" id="SSF82861">
    <property type="entry name" value="Mechanosensitive channel protein MscS (YggB), transmembrane region"/>
    <property type="match status" value="1"/>
</dbReference>
<dbReference type="SUPFAM" id="SSF50182">
    <property type="entry name" value="Sm-like ribonucleoproteins"/>
    <property type="match status" value="1"/>
</dbReference>
<dbReference type="PROSITE" id="PS01246">
    <property type="entry name" value="UPF0003"/>
    <property type="match status" value="1"/>
</dbReference>
<protein>
    <recommendedName>
        <fullName>Small-conductance mechanosensitive channel</fullName>
    </recommendedName>
</protein>
<accession>P0C0S1</accession>
<accession>P11666</accession>
<accession>Q2M9R8</accession>
<sequence length="286" mass="30896">MEDLNVVDSINGAGSWLVANQALLLSYAVNIVAALAIIIVGLIIARMISNAVNRLMISRKIDATVADFLSALVRYGIIAFTLIAALGRVGVQTASVIAVLGAAGLAVGLALQGSLSNLAAGVLLVMFRPFRAGEYVDLGGVAGTVLSVQIFSTTMRTADGKIIVIPNGKIIAGNIINFSREPVRRNEFIIGVAYDSDIDQVKQILTNIIQSEDRILKDREMTVRLNELGASSINFVVRVWSNSGDLQNVYWDVLERIKREFDAAGISFPYPQMDVNFKRVKEDKAA</sequence>
<feature type="chain" id="PRO_0000110238" description="Small-conductance mechanosensitive channel">
    <location>
        <begin position="1"/>
        <end position="286"/>
    </location>
</feature>
<feature type="topological domain" description="Periplasmic" evidence="16">
    <location>
        <begin position="1"/>
        <end position="30"/>
    </location>
</feature>
<feature type="transmembrane region" description="Helical" evidence="4 13">
    <location>
        <begin position="31"/>
        <end position="52"/>
    </location>
</feature>
<feature type="topological domain" description="Cytoplasmic" evidence="16">
    <location>
        <begin position="53"/>
        <end position="67"/>
    </location>
</feature>
<feature type="transmembrane region" description="Helical" evidence="4 13">
    <location>
        <begin position="68"/>
        <end position="88"/>
    </location>
</feature>
<feature type="topological domain" description="Periplasmic" evidence="16">
    <location>
        <begin position="89"/>
        <end position="90"/>
    </location>
</feature>
<feature type="transmembrane region" description="Helical" evidence="4 13">
    <location>
        <begin position="91"/>
        <end position="111"/>
    </location>
</feature>
<feature type="topological domain" description="Cytoplasmic" evidence="16">
    <location>
        <begin position="112"/>
        <end position="286"/>
    </location>
</feature>
<feature type="mutagenesis site" description="No detectable phenotype." evidence="2">
    <original>V</original>
    <variation>C</variation>
    <variation>G</variation>
    <variation>N</variation>
    <location>
        <position position="40"/>
    </location>
</feature>
<feature type="mutagenesis site" description="Normal growth stops, without cell death, due to increased membrane permeability to potassium ions and protons (permeability tested only for D substitutions)." evidence="2">
    <original>V</original>
    <variation>D</variation>
    <variation>K</variation>
    <location>
        <position position="40"/>
    </location>
</feature>
<feature type="mutagenesis site" description="Readily forms disulfide bonds with cross-linkers, suggesting that individual S-58 are only 3 Angstroms apart in the closed state, versus 33 Angstroms apart in the open state crystal structure." evidence="6">
    <original>S</original>
    <variation>C</variation>
    <location>
        <position position="58"/>
    </location>
</feature>
<feature type="mutagenesis site" description="Decreased conductance, due to decreased diameter of the channel portal." evidence="10">
    <original>A</original>
    <variation>F</variation>
    <location>
        <position position="158"/>
    </location>
</feature>
<feature type="mutagenesis site" description="Normal levels of channels are expressed; they recover more slowly than wild-type cells after desensitization." evidence="7">
    <original>ISFPYPQMDVNFKRVKEDKAA</original>
    <variation>HHHHHHLE</variation>
    <location>
        <begin position="266"/>
        <end position="286"/>
    </location>
</feature>
<feature type="mutagenesis site" description="Fewer channels present in the membrane, they require slightly more pressure to open and do not recover after desensitization." evidence="7">
    <original>ISFPYPQMDVNFKRVKEDKAA</original>
    <variation>LE</variation>
    <location>
        <begin position="266"/>
        <end position="286"/>
    </location>
</feature>
<feature type="mutagenesis site" description="Provides biochemical evidence for heptameric structure upon cross-linking." evidence="6">
    <original>S</original>
    <variation>C</variation>
    <location>
        <position position="267"/>
    </location>
</feature>
<feature type="helix" evidence="18">
    <location>
        <begin position="2"/>
        <end position="6"/>
    </location>
</feature>
<feature type="turn" evidence="21">
    <location>
        <begin position="7"/>
        <end position="9"/>
    </location>
</feature>
<feature type="helix" evidence="21">
    <location>
        <begin position="11"/>
        <end position="13"/>
    </location>
</feature>
<feature type="turn" evidence="18">
    <location>
        <begin position="16"/>
        <end position="20"/>
    </location>
</feature>
<feature type="helix" evidence="20">
    <location>
        <begin position="23"/>
        <end position="57"/>
    </location>
</feature>
<feature type="strand" evidence="18">
    <location>
        <begin position="58"/>
        <end position="60"/>
    </location>
</feature>
<feature type="helix" evidence="20">
    <location>
        <begin position="63"/>
        <end position="89"/>
    </location>
</feature>
<feature type="helix" evidence="20">
    <location>
        <begin position="94"/>
        <end position="110"/>
    </location>
</feature>
<feature type="helix" evidence="20">
    <location>
        <begin position="112"/>
        <end position="126"/>
    </location>
</feature>
<feature type="strand" evidence="20">
    <location>
        <begin position="135"/>
        <end position="140"/>
    </location>
</feature>
<feature type="strand" evidence="20">
    <location>
        <begin position="142"/>
        <end position="148"/>
    </location>
</feature>
<feature type="strand" evidence="20">
    <location>
        <begin position="150"/>
        <end position="156"/>
    </location>
</feature>
<feature type="strand" evidence="20">
    <location>
        <begin position="158"/>
        <end position="160"/>
    </location>
</feature>
<feature type="strand" evidence="20">
    <location>
        <begin position="162"/>
        <end position="166"/>
    </location>
</feature>
<feature type="helix" evidence="20">
    <location>
        <begin position="167"/>
        <end position="171"/>
    </location>
</feature>
<feature type="strand" evidence="20">
    <location>
        <begin position="175"/>
        <end position="192"/>
    </location>
</feature>
<feature type="strand" evidence="19">
    <location>
        <begin position="194"/>
        <end position="196"/>
    </location>
</feature>
<feature type="helix" evidence="20">
    <location>
        <begin position="198"/>
        <end position="210"/>
    </location>
</feature>
<feature type="strand" evidence="18">
    <location>
        <begin position="213"/>
        <end position="215"/>
    </location>
</feature>
<feature type="strand" evidence="20">
    <location>
        <begin position="217"/>
        <end position="219"/>
    </location>
</feature>
<feature type="strand" evidence="20">
    <location>
        <begin position="221"/>
        <end position="228"/>
    </location>
</feature>
<feature type="strand" evidence="20">
    <location>
        <begin position="230"/>
        <end position="242"/>
    </location>
</feature>
<feature type="turn" evidence="17">
    <location>
        <begin position="243"/>
        <end position="245"/>
    </location>
</feature>
<feature type="helix" evidence="20">
    <location>
        <begin position="246"/>
        <end position="263"/>
    </location>
</feature>
<feature type="strand" evidence="20">
    <location>
        <begin position="272"/>
        <end position="278"/>
    </location>
</feature>